<feature type="chain" id="PRO_0000198548" description="Ribonuclease P protein component">
    <location>
        <begin position="1"/>
        <end position="115"/>
    </location>
</feature>
<protein>
    <recommendedName>
        <fullName evidence="1">Ribonuclease P protein component</fullName>
        <shortName evidence="1">RNase P protein</shortName>
        <shortName evidence="1">RNaseP protein</shortName>
        <ecNumber evidence="1">3.1.26.5</ecNumber>
    </recommendedName>
    <alternativeName>
        <fullName evidence="1">Protein C5</fullName>
    </alternativeName>
</protein>
<proteinExistence type="inferred from homology"/>
<keyword id="KW-0255">Endonuclease</keyword>
<keyword id="KW-0378">Hydrolase</keyword>
<keyword id="KW-0540">Nuclease</keyword>
<keyword id="KW-1185">Reference proteome</keyword>
<keyword id="KW-0694">RNA-binding</keyword>
<keyword id="KW-0819">tRNA processing</keyword>
<organism>
    <name type="scientific">Symbiobacterium thermophilum (strain DSM 24528 / JCM 14929 / IAM 14863 / T)</name>
    <dbReference type="NCBI Taxonomy" id="292459"/>
    <lineage>
        <taxon>Bacteria</taxon>
        <taxon>Bacillati</taxon>
        <taxon>Bacillota</taxon>
        <taxon>Clostridia</taxon>
        <taxon>Eubacteriales</taxon>
        <taxon>Symbiobacteriaceae</taxon>
        <taxon>Symbiobacterium</taxon>
    </lineage>
</organism>
<gene>
    <name evidence="1" type="primary">rnpA</name>
    <name type="ordered locus">STH3340</name>
</gene>
<name>RNPA_SYMTH</name>
<accession>Q67J29</accession>
<reference key="1">
    <citation type="journal article" date="2004" name="Nucleic Acids Res.">
        <title>Genome sequence of Symbiobacterium thermophilum, an uncultivable bacterium that depends on microbial commensalism.</title>
        <authorList>
            <person name="Ueda K."/>
            <person name="Yamashita A."/>
            <person name="Ishikawa J."/>
            <person name="Shimada M."/>
            <person name="Watsuji T."/>
            <person name="Morimura K."/>
            <person name="Ikeda H."/>
            <person name="Hattori M."/>
            <person name="Beppu T."/>
        </authorList>
    </citation>
    <scope>NUCLEOTIDE SEQUENCE [LARGE SCALE GENOMIC DNA]</scope>
    <source>
        <strain>DSM 24528 / JCM 14929 / IAM 14863 / T</strain>
    </source>
</reference>
<evidence type="ECO:0000255" key="1">
    <source>
        <dbReference type="HAMAP-Rule" id="MF_00227"/>
    </source>
</evidence>
<sequence>MKKAYRLKSRLAFQSVYAQGRSVANRAAVVHVLKQQAGTPTRVGFAAGRKLGKAVVRNRAKRRLREAVRLLWPRVRQGYYIVVIARQAALDMPFPELRQKVEELFERAGLLQREG</sequence>
<comment type="function">
    <text evidence="1">RNaseP catalyzes the removal of the 5'-leader sequence from pre-tRNA to produce the mature 5'-terminus. It can also cleave other RNA substrates such as 4.5S RNA. The protein component plays an auxiliary but essential role in vivo by binding to the 5'-leader sequence and broadening the substrate specificity of the ribozyme.</text>
</comment>
<comment type="catalytic activity">
    <reaction evidence="1">
        <text>Endonucleolytic cleavage of RNA, removing 5'-extranucleotides from tRNA precursor.</text>
        <dbReference type="EC" id="3.1.26.5"/>
    </reaction>
</comment>
<comment type="subunit">
    <text evidence="1">Consists of a catalytic RNA component (M1 or rnpB) and a protein subunit.</text>
</comment>
<comment type="similarity">
    <text evidence="1">Belongs to the RnpA family.</text>
</comment>
<dbReference type="EC" id="3.1.26.5" evidence="1"/>
<dbReference type="EMBL" id="AP006840">
    <property type="protein sequence ID" value="BAD42321.1"/>
    <property type="molecule type" value="Genomic_DNA"/>
</dbReference>
<dbReference type="RefSeq" id="WP_011197451.1">
    <property type="nucleotide sequence ID" value="NC_006177.1"/>
</dbReference>
<dbReference type="SMR" id="Q67J29"/>
<dbReference type="STRING" id="292459.STH3340"/>
<dbReference type="KEGG" id="sth:STH3340"/>
<dbReference type="eggNOG" id="COG0594">
    <property type="taxonomic scope" value="Bacteria"/>
</dbReference>
<dbReference type="HOGENOM" id="CLU_117179_9_0_9"/>
<dbReference type="OrthoDB" id="9810867at2"/>
<dbReference type="Proteomes" id="UP000000417">
    <property type="component" value="Chromosome"/>
</dbReference>
<dbReference type="GO" id="GO:0030677">
    <property type="term" value="C:ribonuclease P complex"/>
    <property type="evidence" value="ECO:0007669"/>
    <property type="project" value="TreeGrafter"/>
</dbReference>
<dbReference type="GO" id="GO:0042781">
    <property type="term" value="F:3'-tRNA processing endoribonuclease activity"/>
    <property type="evidence" value="ECO:0007669"/>
    <property type="project" value="TreeGrafter"/>
</dbReference>
<dbReference type="GO" id="GO:0004526">
    <property type="term" value="F:ribonuclease P activity"/>
    <property type="evidence" value="ECO:0007669"/>
    <property type="project" value="UniProtKB-UniRule"/>
</dbReference>
<dbReference type="GO" id="GO:0000049">
    <property type="term" value="F:tRNA binding"/>
    <property type="evidence" value="ECO:0007669"/>
    <property type="project" value="UniProtKB-UniRule"/>
</dbReference>
<dbReference type="GO" id="GO:0001682">
    <property type="term" value="P:tRNA 5'-leader removal"/>
    <property type="evidence" value="ECO:0007669"/>
    <property type="project" value="UniProtKB-UniRule"/>
</dbReference>
<dbReference type="Gene3D" id="3.30.230.10">
    <property type="match status" value="1"/>
</dbReference>
<dbReference type="HAMAP" id="MF_00227">
    <property type="entry name" value="RNase_P"/>
    <property type="match status" value="1"/>
</dbReference>
<dbReference type="InterPro" id="IPR020568">
    <property type="entry name" value="Ribosomal_Su5_D2-typ_SF"/>
</dbReference>
<dbReference type="InterPro" id="IPR014721">
    <property type="entry name" value="Ribsml_uS5_D2-typ_fold_subgr"/>
</dbReference>
<dbReference type="InterPro" id="IPR000100">
    <property type="entry name" value="RNase_P"/>
</dbReference>
<dbReference type="InterPro" id="IPR020539">
    <property type="entry name" value="RNase_P_CS"/>
</dbReference>
<dbReference type="NCBIfam" id="TIGR00188">
    <property type="entry name" value="rnpA"/>
    <property type="match status" value="1"/>
</dbReference>
<dbReference type="PANTHER" id="PTHR33992">
    <property type="entry name" value="RIBONUCLEASE P PROTEIN COMPONENT"/>
    <property type="match status" value="1"/>
</dbReference>
<dbReference type="PANTHER" id="PTHR33992:SF1">
    <property type="entry name" value="RIBONUCLEASE P PROTEIN COMPONENT"/>
    <property type="match status" value="1"/>
</dbReference>
<dbReference type="Pfam" id="PF00825">
    <property type="entry name" value="Ribonuclease_P"/>
    <property type="match status" value="1"/>
</dbReference>
<dbReference type="SUPFAM" id="SSF54211">
    <property type="entry name" value="Ribosomal protein S5 domain 2-like"/>
    <property type="match status" value="1"/>
</dbReference>
<dbReference type="PROSITE" id="PS00648">
    <property type="entry name" value="RIBONUCLEASE_P"/>
    <property type="match status" value="1"/>
</dbReference>